<dbReference type="EC" id="3.6.5.-" evidence="1"/>
<dbReference type="EMBL" id="CP000362">
    <property type="protein sequence ID" value="ABG32207.1"/>
    <property type="molecule type" value="Genomic_DNA"/>
</dbReference>
<dbReference type="RefSeq" id="WP_011568824.1">
    <property type="nucleotide sequence ID" value="NC_008209.1"/>
</dbReference>
<dbReference type="SMR" id="Q165Y6"/>
<dbReference type="STRING" id="375451.RD1_2660"/>
<dbReference type="KEGG" id="rde:RD1_2660"/>
<dbReference type="eggNOG" id="COG0536">
    <property type="taxonomic scope" value="Bacteria"/>
</dbReference>
<dbReference type="HOGENOM" id="CLU_011747_2_0_5"/>
<dbReference type="OrthoDB" id="9807318at2"/>
<dbReference type="Proteomes" id="UP000007029">
    <property type="component" value="Chromosome"/>
</dbReference>
<dbReference type="GO" id="GO:0005737">
    <property type="term" value="C:cytoplasm"/>
    <property type="evidence" value="ECO:0007669"/>
    <property type="project" value="UniProtKB-SubCell"/>
</dbReference>
<dbReference type="GO" id="GO:0005525">
    <property type="term" value="F:GTP binding"/>
    <property type="evidence" value="ECO:0007669"/>
    <property type="project" value="UniProtKB-UniRule"/>
</dbReference>
<dbReference type="GO" id="GO:0003924">
    <property type="term" value="F:GTPase activity"/>
    <property type="evidence" value="ECO:0007669"/>
    <property type="project" value="UniProtKB-UniRule"/>
</dbReference>
<dbReference type="GO" id="GO:0000287">
    <property type="term" value="F:magnesium ion binding"/>
    <property type="evidence" value="ECO:0007669"/>
    <property type="project" value="InterPro"/>
</dbReference>
<dbReference type="GO" id="GO:0042254">
    <property type="term" value="P:ribosome biogenesis"/>
    <property type="evidence" value="ECO:0007669"/>
    <property type="project" value="UniProtKB-UniRule"/>
</dbReference>
<dbReference type="CDD" id="cd01898">
    <property type="entry name" value="Obg"/>
    <property type="match status" value="1"/>
</dbReference>
<dbReference type="FunFam" id="2.70.210.12:FF:000001">
    <property type="entry name" value="GTPase Obg"/>
    <property type="match status" value="1"/>
</dbReference>
<dbReference type="Gene3D" id="2.70.210.12">
    <property type="entry name" value="GTP1/OBG domain"/>
    <property type="match status" value="1"/>
</dbReference>
<dbReference type="Gene3D" id="3.40.50.300">
    <property type="entry name" value="P-loop containing nucleotide triphosphate hydrolases"/>
    <property type="match status" value="1"/>
</dbReference>
<dbReference type="HAMAP" id="MF_01454">
    <property type="entry name" value="GTPase_Obg"/>
    <property type="match status" value="1"/>
</dbReference>
<dbReference type="InterPro" id="IPR031167">
    <property type="entry name" value="G_OBG"/>
</dbReference>
<dbReference type="InterPro" id="IPR006073">
    <property type="entry name" value="GTP-bd"/>
</dbReference>
<dbReference type="InterPro" id="IPR014100">
    <property type="entry name" value="GTP-bd_Obg/CgtA"/>
</dbReference>
<dbReference type="InterPro" id="IPR006074">
    <property type="entry name" value="GTP1-OBG_CS"/>
</dbReference>
<dbReference type="InterPro" id="IPR006169">
    <property type="entry name" value="GTP1_OBG_dom"/>
</dbReference>
<dbReference type="InterPro" id="IPR036726">
    <property type="entry name" value="GTP1_OBG_dom_sf"/>
</dbReference>
<dbReference type="InterPro" id="IPR045086">
    <property type="entry name" value="OBG_GTPase"/>
</dbReference>
<dbReference type="InterPro" id="IPR027417">
    <property type="entry name" value="P-loop_NTPase"/>
</dbReference>
<dbReference type="NCBIfam" id="TIGR02729">
    <property type="entry name" value="Obg_CgtA"/>
    <property type="match status" value="1"/>
</dbReference>
<dbReference type="NCBIfam" id="NF008955">
    <property type="entry name" value="PRK12297.1"/>
    <property type="match status" value="1"/>
</dbReference>
<dbReference type="NCBIfam" id="NF008956">
    <property type="entry name" value="PRK12299.1"/>
    <property type="match status" value="1"/>
</dbReference>
<dbReference type="PANTHER" id="PTHR11702">
    <property type="entry name" value="DEVELOPMENTALLY REGULATED GTP-BINDING PROTEIN-RELATED"/>
    <property type="match status" value="1"/>
</dbReference>
<dbReference type="PANTHER" id="PTHR11702:SF31">
    <property type="entry name" value="MITOCHONDRIAL RIBOSOME-ASSOCIATED GTPASE 2"/>
    <property type="match status" value="1"/>
</dbReference>
<dbReference type="Pfam" id="PF01018">
    <property type="entry name" value="GTP1_OBG"/>
    <property type="match status" value="1"/>
</dbReference>
<dbReference type="Pfam" id="PF01926">
    <property type="entry name" value="MMR_HSR1"/>
    <property type="match status" value="1"/>
</dbReference>
<dbReference type="PIRSF" id="PIRSF002401">
    <property type="entry name" value="GTP_bd_Obg/CgtA"/>
    <property type="match status" value="1"/>
</dbReference>
<dbReference type="PRINTS" id="PR00326">
    <property type="entry name" value="GTP1OBG"/>
</dbReference>
<dbReference type="SUPFAM" id="SSF82051">
    <property type="entry name" value="Obg GTP-binding protein N-terminal domain"/>
    <property type="match status" value="1"/>
</dbReference>
<dbReference type="SUPFAM" id="SSF52540">
    <property type="entry name" value="P-loop containing nucleoside triphosphate hydrolases"/>
    <property type="match status" value="1"/>
</dbReference>
<dbReference type="PROSITE" id="PS51710">
    <property type="entry name" value="G_OBG"/>
    <property type="match status" value="1"/>
</dbReference>
<dbReference type="PROSITE" id="PS00905">
    <property type="entry name" value="GTP1_OBG"/>
    <property type="match status" value="1"/>
</dbReference>
<dbReference type="PROSITE" id="PS51883">
    <property type="entry name" value="OBG"/>
    <property type="match status" value="1"/>
</dbReference>
<organism>
    <name type="scientific">Roseobacter denitrificans (strain ATCC 33942 / OCh 114)</name>
    <name type="common">Erythrobacter sp. (strain OCh 114)</name>
    <name type="synonym">Roseobacter denitrificans</name>
    <dbReference type="NCBI Taxonomy" id="375451"/>
    <lineage>
        <taxon>Bacteria</taxon>
        <taxon>Pseudomonadati</taxon>
        <taxon>Pseudomonadota</taxon>
        <taxon>Alphaproteobacteria</taxon>
        <taxon>Rhodobacterales</taxon>
        <taxon>Roseobacteraceae</taxon>
        <taxon>Roseobacter</taxon>
    </lineage>
</organism>
<protein>
    <recommendedName>
        <fullName evidence="1">GTPase Obg</fullName>
        <ecNumber evidence="1">3.6.5.-</ecNumber>
    </recommendedName>
    <alternativeName>
        <fullName evidence="1">GTP-binding protein Obg</fullName>
    </alternativeName>
</protein>
<comment type="function">
    <text evidence="1">An essential GTPase which binds GTP, GDP and possibly (p)ppGpp with moderate affinity, with high nucleotide exchange rates and a fairly low GTP hydrolysis rate. Plays a role in control of the cell cycle, stress response, ribosome biogenesis and in those bacteria that undergo differentiation, in morphogenesis control.</text>
</comment>
<comment type="cofactor">
    <cofactor evidence="1">
        <name>Mg(2+)</name>
        <dbReference type="ChEBI" id="CHEBI:18420"/>
    </cofactor>
</comment>
<comment type="subunit">
    <text evidence="1">Monomer.</text>
</comment>
<comment type="subcellular location">
    <subcellularLocation>
        <location evidence="1">Cytoplasm</location>
    </subcellularLocation>
</comment>
<comment type="similarity">
    <text evidence="1">Belongs to the TRAFAC class OBG-HflX-like GTPase superfamily. OBG GTPase family.</text>
</comment>
<accession>Q165Y6</accession>
<evidence type="ECO:0000255" key="1">
    <source>
        <dbReference type="HAMAP-Rule" id="MF_01454"/>
    </source>
</evidence>
<evidence type="ECO:0000255" key="2">
    <source>
        <dbReference type="PROSITE-ProRule" id="PRU01231"/>
    </source>
</evidence>
<evidence type="ECO:0000256" key="3">
    <source>
        <dbReference type="SAM" id="MobiDB-lite"/>
    </source>
</evidence>
<reference key="1">
    <citation type="journal article" date="2007" name="J. Bacteriol.">
        <title>The complete genome sequence of Roseobacter denitrificans reveals a mixotrophic rather than photosynthetic metabolism.</title>
        <authorList>
            <person name="Swingley W.D."/>
            <person name="Sadekar S."/>
            <person name="Mastrian S.D."/>
            <person name="Matthies H.J."/>
            <person name="Hao J."/>
            <person name="Ramos H."/>
            <person name="Acharya C.R."/>
            <person name="Conrad A.L."/>
            <person name="Taylor H.L."/>
            <person name="Dejesa L.C."/>
            <person name="Shah M.K."/>
            <person name="O'Huallachain M.E."/>
            <person name="Lince M.T."/>
            <person name="Blankenship R.E."/>
            <person name="Beatty J.T."/>
            <person name="Touchman J.W."/>
        </authorList>
    </citation>
    <scope>NUCLEOTIDE SEQUENCE [LARGE SCALE GENOMIC DNA]</scope>
    <source>
        <strain>ATCC 33942 / OCh 114</strain>
    </source>
</reference>
<sequence>MKFLDLCKVYIRSGAGGGGCVSFRREKYIEYGGPDGGDGGTGGSVWAEAVDGLNTLIDFRYQQHFFAKNGQPGMGRQRTGKDGDDIVLRVPVGTEILDEDQETVICDLTEVGQRVQLARGGNGGFGNLHFKSSTNQAPRRSNPGQDGVERTLWLRLKLIADVGLLGLPNAGKSTFLAATSNARPKIADYPFTTLHPNLGVVGVDNTEFVVADIPGLIEGASEGRGLGDLFLGHIERCAVLLHLFDGTSETLIEDYHTIIGELEAYGVGLADKPRITVLNKIDALDEERRAMALKQLNNVCGGGVMAMSGVAGDGVTDVLRKLRGEISDEPLRHKPVEEKEPWRP</sequence>
<keyword id="KW-0963">Cytoplasm</keyword>
<keyword id="KW-0342">GTP-binding</keyword>
<keyword id="KW-0378">Hydrolase</keyword>
<keyword id="KW-0460">Magnesium</keyword>
<keyword id="KW-0479">Metal-binding</keyword>
<keyword id="KW-0547">Nucleotide-binding</keyword>
<keyword id="KW-1185">Reference proteome</keyword>
<name>OBG_ROSDO</name>
<gene>
    <name evidence="1" type="primary">obg</name>
    <name type="ordered locus">RD1_2660</name>
</gene>
<feature type="chain" id="PRO_0000386211" description="GTPase Obg">
    <location>
        <begin position="1"/>
        <end position="344"/>
    </location>
</feature>
<feature type="domain" description="Obg" evidence="2">
    <location>
        <begin position="1"/>
        <end position="159"/>
    </location>
</feature>
<feature type="domain" description="OBG-type G" evidence="1">
    <location>
        <begin position="160"/>
        <end position="327"/>
    </location>
</feature>
<feature type="region of interest" description="Disordered" evidence="3">
    <location>
        <begin position="126"/>
        <end position="146"/>
    </location>
</feature>
<feature type="compositionally biased region" description="Polar residues" evidence="3">
    <location>
        <begin position="130"/>
        <end position="144"/>
    </location>
</feature>
<feature type="binding site" evidence="1">
    <location>
        <begin position="166"/>
        <end position="173"/>
    </location>
    <ligand>
        <name>GTP</name>
        <dbReference type="ChEBI" id="CHEBI:37565"/>
    </ligand>
</feature>
<feature type="binding site" evidence="1">
    <location>
        <position position="173"/>
    </location>
    <ligand>
        <name>Mg(2+)</name>
        <dbReference type="ChEBI" id="CHEBI:18420"/>
    </ligand>
</feature>
<feature type="binding site" evidence="1">
    <location>
        <begin position="191"/>
        <end position="195"/>
    </location>
    <ligand>
        <name>GTP</name>
        <dbReference type="ChEBI" id="CHEBI:37565"/>
    </ligand>
</feature>
<feature type="binding site" evidence="1">
    <location>
        <position position="193"/>
    </location>
    <ligand>
        <name>Mg(2+)</name>
        <dbReference type="ChEBI" id="CHEBI:18420"/>
    </ligand>
</feature>
<feature type="binding site" evidence="1">
    <location>
        <begin position="212"/>
        <end position="215"/>
    </location>
    <ligand>
        <name>GTP</name>
        <dbReference type="ChEBI" id="CHEBI:37565"/>
    </ligand>
</feature>
<feature type="binding site" evidence="1">
    <location>
        <begin position="279"/>
        <end position="282"/>
    </location>
    <ligand>
        <name>GTP</name>
        <dbReference type="ChEBI" id="CHEBI:37565"/>
    </ligand>
</feature>
<feature type="binding site" evidence="1">
    <location>
        <begin position="308"/>
        <end position="310"/>
    </location>
    <ligand>
        <name>GTP</name>
        <dbReference type="ChEBI" id="CHEBI:37565"/>
    </ligand>
</feature>
<proteinExistence type="inferred from homology"/>